<sequence>MGIFTLCSCGVPCPTRSFYRRHMASGCDLLPTRQQLADVGYTEPTVIAEVVTPPTQAPLELFVEISPPVLAPFEPSVEISLPIQAPAEPIVEASPPAATQFVGIEALIASGPCFFGSFGPFEEYYSSPVGPLTRFDTLRREGHCAARARVAAVAAKAVIVQQTLSETAAAMRATLPLWMKGQVAPPVKSKRALKREAKAKAKADYLASDEAYYKATDGLTALPPGVSRDVHMRQLDAMEVAYLAHVGDVAARGFQRRQVLRAAYKARCEKRAFKRFLEEVDFLCLPVHIVDKIQTPFDGEQAAAPEMQKGMVYATSRRQVKTRRSFSSFLPKEDFSFTLGVCPARSPTVTPSSTPSTSRSSSPEPRVSSPSGVLPEKAACIGFCSHGSECTEHFCFGYLNLKSEALASQYLAWLLQTKLPGGISCFELEVSSYLEQCQDTMEAIDLWWHAMDRYCFNFKSSKYVILDNFLCKHSIAKDQTPREFLAKHRIAKAKALHRVPSRKEKMQALCEQRADKAWDAYIELNKNCKVGEGPLEYLKAAKDRCVEFFSPFTKYCNEAIRSLNPLVAILGPFKDGFWTCFNNLREKCLKMVNDHWLAFAAGTTLVLSLIFLLCIICLVKIFSILIANLGLGVVAITTLVTALVVGFFLFNGMLEQAADLQLCSLVASDFLNFLAQNQGSALVAGTMASVQDDLRGQGVSWCFSALYKLISRVVPVGIKETSILFNSIGNVSRSANHSKDFFLNMKEMACSWMDALSDAMALISDDSVSAMQVLKHLCEHDFLDWAKKVERYAGETYDSLIISPAERLKILRILADQQESFQKAFYNPRIASKAPRLMLTEFNRLSTLLRDAHNALSRASLFDRQRTPPFWVHLYSENGGTGKSMAMMPLGNHMLDAIGEPKTCRFVTRNVASKFLNGYQHQPCFLMDEFGAAPKQDYSDEVTMLDLVSPNALTLNMAAIGEKNTMFTSKLIISTANRRLAHPDVKLGANLDGFLRRRNILAEVVLVSGKPHFHEFNLLAPRTEQKVYLNRAMQESQVPDPLTPQEFYSLCTENFVNFLNQQSSTVAMSAGLNYVRSSDFSHLKDFLLFKIGLDFEENEVERIVTDYGNSLKNETIFPPEHEQIFQKWKDALDSLTLPELVSLLDKSVSETFVYTLISENHPNVVMSSLTPYECMIYAICKKKYREGTEAKLPFPEGETTSYGASFLSFVAQVALCIPKWALFCVALCAVLLVGYLIIKFAIFLFSGVVTLLGALAFSNLSGDGAEDSPSFDTNRKRGGVKFEYSTKWDASSTNRFAESYSENGTIPAGTSWADFFGEGPEEEPSQSLLNLLKHQVVLIAEPTKVVYNCIALGGRNFLITKHVWDLMPACNYGLYGYAVAKDRIFISPRIRPCAQLKGRDLVIVQLPDSVPPFTSLPRDIFLENMAKAPKTANACLVVAKPLFERRSVAKLEQTIYPFKQLPQVHSKDTYSCGSLGSKQMPACYSYVFETYAGLCTSPLIAQEGGRCIILGLHVVGDRSKMGYAQIVTLDDFSDVALSDKVGQGPEEMYIPTKNSECFGSVTKLGAWTGPKPYFLEKTSLIPSLISTSIDVERTTEPAILSQRDKRLKDSINPEFDVFLEGMKKYAVEAHSLDEDLEVFEDALDRVFLEIPEHACEDLTNDQVCNGIEDDPYAEGIVMQTAEGFPFCTQRPAGASGKSWLFAGAPGDWHIVPGSLLANEMHKKEVAPSRGLFEPLIGIDFPKDEKVDSSKVYIKPKTRLFTILPVDYNILVRKYFLSSVSHIMTQHNTIPVKVGIDCLSNEWSILYHQLRSKGTNWFNGDYSRFDGITPRNVLQGIVKRINKFYNNKNSLAITDSNLSINSDLARSLLTDMASTRYGLTNGDLWYVTSGIPSGFPLTVIVNSLVNNFFIHFSYIKLMKREELNSLYPLHSFRQMVAYATYGDDNLVSVNDVITEKFNLVKIADLLAEHGVTLKNGADKNEEILSPFYPLEKVDFLKRKFVHYQGHVVAPLNPVNITERLHWIRKGLGEADATLENCSSAAFEALFHGRCYYDTLVAKIYKACAASKLSIQLPTYNDALAIFLSNDSFAKAIQTISLDLPKAIFVNKSNYFVSEIFPDVFFCSNERNVTLHKLLEITTTRNICYISRNYESRNSSRGLFSLKGEGWALAPVSARLVVYKNMQKPVYFVDEANDGLALAYCLDYMLRIKGVSRSRLAQVLYNIFGHDETLCSRIASNFSLLDSNKYMPPHKK</sequence>
<feature type="chain" id="PRO_5000072352" description="Protease cofactor" evidence="2">
    <location>
        <begin position="1"/>
        <end position="697"/>
    </location>
</feature>
<feature type="chain" id="PRO_5000072353" description="Putative helicase" evidence="2">
    <location>
        <begin position="698"/>
        <end position="1263"/>
    </location>
</feature>
<feature type="chain" id="PRO_5000072354" description="Viral genome-linked protein" evidence="2">
    <location>
        <begin position="1264"/>
        <end position="1318"/>
    </location>
</feature>
<feature type="chain" id="PRO_5000072355" description="Picornain 3C-like protease" evidence="2">
    <location>
        <begin position="1319"/>
        <end position="1543"/>
    </location>
</feature>
<feature type="chain" id="PRO_5000072356" description="RNA-directed RNA polymerase" evidence="2">
    <location>
        <begin position="1544"/>
        <end position="2250"/>
    </location>
</feature>
<feature type="transmembrane region" description="Helical" evidence="2">
    <location>
        <begin position="1225"/>
        <end position="1245"/>
    </location>
</feature>
<feature type="domain" description="SF3 helicase" evidence="4">
    <location>
        <begin position="849"/>
        <end position="1020"/>
    </location>
</feature>
<feature type="domain" description="Peptidase C3" evidence="5">
    <location>
        <begin position="1319"/>
        <end position="1532"/>
    </location>
</feature>
<feature type="domain" description="RdRp catalytic" evidence="3">
    <location>
        <begin position="1814"/>
        <end position="1956"/>
    </location>
</feature>
<feature type="region of interest" description="Disordered" evidence="6">
    <location>
        <begin position="346"/>
        <end position="372"/>
    </location>
</feature>
<feature type="compositionally biased region" description="Low complexity" evidence="6">
    <location>
        <begin position="346"/>
        <end position="371"/>
    </location>
</feature>
<feature type="active site" description="For picornain 3C-like protease activity" evidence="5">
    <location>
        <position position="1362"/>
    </location>
</feature>
<feature type="active site" description="For picornain 3C-like protease activity" evidence="5">
    <location>
        <position position="1400"/>
    </location>
</feature>
<feature type="active site" description="For picornain 3C-like protease activity" evidence="5">
    <location>
        <position position="1495"/>
    </location>
</feature>
<feature type="site" description="Cleavage" evidence="2">
    <location>
        <begin position="697"/>
        <end position="698"/>
    </location>
</feature>
<feature type="site" description="Cleavage" evidence="2">
    <location>
        <begin position="1263"/>
        <end position="1264"/>
    </location>
</feature>
<feature type="site" description="Cleavage" evidence="2">
    <location>
        <begin position="1318"/>
        <end position="1319"/>
    </location>
</feature>
<feature type="site" description="Cleavage" evidence="2">
    <location>
        <begin position="1543"/>
        <end position="1544"/>
    </location>
</feature>
<feature type="modified residue" description="O-(5'-phospho-RNA)-serine" evidence="1">
    <location>
        <position position="1299"/>
    </location>
</feature>
<keyword id="KW-0067">ATP-binding</keyword>
<keyword id="KW-0191">Covalent protein-RNA linkage</keyword>
<keyword id="KW-0347">Helicase</keyword>
<keyword id="KW-1043">Host membrane</keyword>
<keyword id="KW-0378">Hydrolase</keyword>
<keyword id="KW-0472">Membrane</keyword>
<keyword id="KW-0547">Nucleotide-binding</keyword>
<keyword id="KW-0548">Nucleotidyltransferase</keyword>
<keyword id="KW-0597">Phosphoprotein</keyword>
<keyword id="KW-0645">Protease</keyword>
<keyword id="KW-1185">Reference proteome</keyword>
<keyword id="KW-0696">RNA-directed RNA polymerase</keyword>
<keyword id="KW-0788">Thiol protease</keyword>
<keyword id="KW-0808">Transferase</keyword>
<keyword id="KW-0812">Transmembrane</keyword>
<keyword id="KW-1133">Transmembrane helix</keyword>
<keyword id="KW-0693">Viral RNA replication</keyword>
<name>POL1_CRLVP</name>
<accession>Q6EWG9</accession>
<evidence type="ECO:0000250" key="1"/>
<evidence type="ECO:0000255" key="2"/>
<evidence type="ECO:0000255" key="3">
    <source>
        <dbReference type="PROSITE-ProRule" id="PRU00539"/>
    </source>
</evidence>
<evidence type="ECO:0000255" key="4">
    <source>
        <dbReference type="PROSITE-ProRule" id="PRU00551"/>
    </source>
</evidence>
<evidence type="ECO:0000255" key="5">
    <source>
        <dbReference type="PROSITE-ProRule" id="PRU01222"/>
    </source>
</evidence>
<evidence type="ECO:0000256" key="6">
    <source>
        <dbReference type="SAM" id="MobiDB-lite"/>
    </source>
</evidence>
<evidence type="ECO:0000305" key="7"/>
<organismHost>
    <name type="scientific">Balsamorhiza sagittata</name>
    <dbReference type="NCBI Taxonomy" id="230209"/>
</organismHost>
<organismHost>
    <name type="scientific">Malus domestica</name>
    <name type="common">Apple</name>
    <name type="synonym">Pyrus malus</name>
    <dbReference type="NCBI Taxonomy" id="3750"/>
</organismHost>
<organismHost>
    <name type="scientific">Plantago major</name>
    <name type="common">Common plantain</name>
    <dbReference type="NCBI Taxonomy" id="29818"/>
</organismHost>
<organismHost>
    <name type="scientific">Prunus avium</name>
    <name type="common">Cherry</name>
    <name type="synonym">Cerasus avium</name>
    <dbReference type="NCBI Taxonomy" id="42229"/>
</organismHost>
<organismHost>
    <name type="scientific">Prunus persica</name>
    <name type="common">Peach</name>
    <name type="synonym">Amygdalus persica</name>
    <dbReference type="NCBI Taxonomy" id="3760"/>
</organismHost>
<organismHost>
    <name type="scientific">Taraxacum officinale</name>
    <name type="common">Common dandelion</name>
    <name type="synonym">Leontodon taraxacum</name>
    <dbReference type="NCBI Taxonomy" id="50225"/>
</organismHost>
<protein>
    <recommendedName>
        <fullName>RNA1 polyprotein</fullName>
    </recommendedName>
    <alternativeName>
        <fullName>Genome polyprotein B</fullName>
    </alternativeName>
    <alternativeName>
        <fullName>P1</fullName>
    </alternativeName>
    <component>
        <recommendedName>
            <fullName>Protease cofactor</fullName>
        </recommendedName>
    </component>
    <component>
        <recommendedName>
            <fullName>Putative helicase</fullName>
            <ecNumber>3.6.4.-</ecNumber>
        </recommendedName>
        <alternativeName>
            <fullName>Membrane-binding protein</fullName>
        </alternativeName>
        <alternativeName>
            <fullName>NTP-binding protein</fullName>
            <shortName>NTB</shortName>
        </alternativeName>
    </component>
    <component>
        <recommendedName>
            <fullName>Viral genome-linked protein</fullName>
        </recommendedName>
        <alternativeName>
            <fullName>VPg</fullName>
        </alternativeName>
    </component>
    <component>
        <recommendedName>
            <fullName>Picornain 3C-like protease</fullName>
            <shortName>3C-like protease</shortName>
            <ecNumber>3.4.22.-</ecNumber>
        </recommendedName>
    </component>
    <component>
        <recommendedName>
            <fullName>RNA-directed RNA polymerase</fullName>
            <ecNumber>2.7.7.48</ecNumber>
        </recommendedName>
    </component>
</protein>
<comment type="function">
    <text>Picornain 3C-like protease is a thiol protease that probably cleaves the B and M polyproteins.</text>
</comment>
<comment type="function">
    <text evidence="1">Viral genome-linked protein (VPg) plays a role in RNA replication.</text>
</comment>
<comment type="catalytic activity">
    <reaction evidence="3">
        <text>RNA(n) + a ribonucleoside 5'-triphosphate = RNA(n+1) + diphosphate</text>
        <dbReference type="Rhea" id="RHEA:21248"/>
        <dbReference type="Rhea" id="RHEA-COMP:14527"/>
        <dbReference type="Rhea" id="RHEA-COMP:17342"/>
        <dbReference type="ChEBI" id="CHEBI:33019"/>
        <dbReference type="ChEBI" id="CHEBI:61557"/>
        <dbReference type="ChEBI" id="CHEBI:140395"/>
        <dbReference type="EC" id="2.7.7.48"/>
    </reaction>
</comment>
<comment type="subcellular location">
    <molecule>Putative helicase</molecule>
    <subcellularLocation>
        <location evidence="7">Host membrane</location>
        <topology evidence="7">Single-pass membrane protein</topology>
    </subcellularLocation>
</comment>
<comment type="PTM">
    <text evidence="1">Specific enzymatic cleavages by picornain 3C-like protease in vivo yield mature proteins. Picornain 3C-like protease is autocatalytically processed (By similarity).</text>
</comment>
<comment type="PTM">
    <text evidence="1">Viral genome-linked protein (VPg) is uridylylated by the polymerase and is covalently linked to the 5'-end of genomic RNA. This uridylylated form acts as a nucleotide-peptide primer for the polymerase (By similarity).</text>
</comment>
<comment type="similarity">
    <text evidence="7">Belongs to the comoviridae genome polyprotein B family.</text>
</comment>
<dbReference type="EC" id="3.6.4.-"/>
<dbReference type="EC" id="3.4.22.-"/>
<dbReference type="EC" id="2.7.7.48"/>
<dbReference type="EMBL" id="AJ621357">
    <property type="protein sequence ID" value="CAF21713.1"/>
    <property type="molecule type" value="Genomic_RNA"/>
</dbReference>
<dbReference type="RefSeq" id="YP_081444.1">
    <property type="nucleotide sequence ID" value="NC_006271.1"/>
</dbReference>
<dbReference type="SMR" id="Q6EWG9"/>
<dbReference type="GeneID" id="3021844"/>
<dbReference type="KEGG" id="vg:3021844"/>
<dbReference type="Proteomes" id="UP000006923">
    <property type="component" value="Genome"/>
</dbReference>
<dbReference type="GO" id="GO:0033644">
    <property type="term" value="C:host cell membrane"/>
    <property type="evidence" value="ECO:0007669"/>
    <property type="project" value="UniProtKB-SubCell"/>
</dbReference>
<dbReference type="GO" id="GO:0016020">
    <property type="term" value="C:membrane"/>
    <property type="evidence" value="ECO:0007669"/>
    <property type="project" value="UniProtKB-KW"/>
</dbReference>
<dbReference type="GO" id="GO:0005524">
    <property type="term" value="F:ATP binding"/>
    <property type="evidence" value="ECO:0007669"/>
    <property type="project" value="UniProtKB-KW"/>
</dbReference>
<dbReference type="GO" id="GO:0004197">
    <property type="term" value="F:cysteine-type endopeptidase activity"/>
    <property type="evidence" value="ECO:0007669"/>
    <property type="project" value="InterPro"/>
</dbReference>
<dbReference type="GO" id="GO:0003723">
    <property type="term" value="F:RNA binding"/>
    <property type="evidence" value="ECO:0007669"/>
    <property type="project" value="InterPro"/>
</dbReference>
<dbReference type="GO" id="GO:0003724">
    <property type="term" value="F:RNA helicase activity"/>
    <property type="evidence" value="ECO:0007669"/>
    <property type="project" value="InterPro"/>
</dbReference>
<dbReference type="GO" id="GO:0003968">
    <property type="term" value="F:RNA-directed RNA polymerase activity"/>
    <property type="evidence" value="ECO:0007669"/>
    <property type="project" value="UniProtKB-KW"/>
</dbReference>
<dbReference type="GO" id="GO:0006351">
    <property type="term" value="P:DNA-templated transcription"/>
    <property type="evidence" value="ECO:0007669"/>
    <property type="project" value="InterPro"/>
</dbReference>
<dbReference type="GO" id="GO:0006508">
    <property type="term" value="P:proteolysis"/>
    <property type="evidence" value="ECO:0007669"/>
    <property type="project" value="UniProtKB-KW"/>
</dbReference>
<dbReference type="GO" id="GO:0039694">
    <property type="term" value="P:viral RNA genome replication"/>
    <property type="evidence" value="ECO:0007669"/>
    <property type="project" value="InterPro"/>
</dbReference>
<dbReference type="CDD" id="cd23169">
    <property type="entry name" value="ps-ssRNAv-Picornavirales"/>
    <property type="match status" value="1"/>
</dbReference>
<dbReference type="Gene3D" id="1.20.960.20">
    <property type="match status" value="1"/>
</dbReference>
<dbReference type="Gene3D" id="3.30.70.270">
    <property type="match status" value="1"/>
</dbReference>
<dbReference type="Gene3D" id="2.40.10.10">
    <property type="entry name" value="Trypsin-like serine proteases"/>
    <property type="match status" value="1"/>
</dbReference>
<dbReference type="InterPro" id="IPR043502">
    <property type="entry name" value="DNA/RNA_pol_sf"/>
</dbReference>
<dbReference type="InterPro" id="IPR000605">
    <property type="entry name" value="Helicase_SF3_ssDNA/RNA_vir"/>
</dbReference>
<dbReference type="InterPro" id="IPR014759">
    <property type="entry name" value="Helicase_SF3_ssRNA_vir"/>
</dbReference>
<dbReference type="InterPro" id="IPR044067">
    <property type="entry name" value="PCV_3C_PRO"/>
</dbReference>
<dbReference type="InterPro" id="IPR000199">
    <property type="entry name" value="Peptidase_C3A/C3B_picornavir"/>
</dbReference>
<dbReference type="InterPro" id="IPR009003">
    <property type="entry name" value="Peptidase_S1_PA"/>
</dbReference>
<dbReference type="InterPro" id="IPR043504">
    <property type="entry name" value="Peptidase_S1_PA_chymotrypsin"/>
</dbReference>
<dbReference type="InterPro" id="IPR043128">
    <property type="entry name" value="Rev_trsase/Diguanyl_cyclase"/>
</dbReference>
<dbReference type="InterPro" id="IPR001205">
    <property type="entry name" value="RNA-dir_pol_C"/>
</dbReference>
<dbReference type="InterPro" id="IPR007094">
    <property type="entry name" value="RNA-dir_pol_PSvirus"/>
</dbReference>
<dbReference type="Pfam" id="PF00548">
    <property type="entry name" value="Peptidase_C3"/>
    <property type="match status" value="1"/>
</dbReference>
<dbReference type="Pfam" id="PF00680">
    <property type="entry name" value="RdRP_1"/>
    <property type="match status" value="1"/>
</dbReference>
<dbReference type="Pfam" id="PF00910">
    <property type="entry name" value="RNA_helicase"/>
    <property type="match status" value="1"/>
</dbReference>
<dbReference type="SUPFAM" id="SSF56672">
    <property type="entry name" value="DNA/RNA polymerases"/>
    <property type="match status" value="1"/>
</dbReference>
<dbReference type="SUPFAM" id="SSF50494">
    <property type="entry name" value="Trypsin-like serine proteases"/>
    <property type="match status" value="1"/>
</dbReference>
<dbReference type="PROSITE" id="PS51874">
    <property type="entry name" value="PCV_3C_PRO"/>
    <property type="match status" value="1"/>
</dbReference>
<dbReference type="PROSITE" id="PS50507">
    <property type="entry name" value="RDRP_SSRNA_POS"/>
    <property type="match status" value="1"/>
</dbReference>
<dbReference type="PROSITE" id="PS51218">
    <property type="entry name" value="SF3_HELICASE_2"/>
    <property type="match status" value="1"/>
</dbReference>
<organism>
    <name type="scientific">Cherry rasp leaf virus (isolate Potato/United States)</name>
    <name type="common">CRLV</name>
    <dbReference type="NCBI Taxonomy" id="650137"/>
    <lineage>
        <taxon>Viruses</taxon>
        <taxon>Riboviria</taxon>
        <taxon>Orthornavirae</taxon>
        <taxon>Pisuviricota</taxon>
        <taxon>Pisoniviricetes</taxon>
        <taxon>Picornavirales</taxon>
        <taxon>Secoviridae</taxon>
        <taxon>Cheravirus</taxon>
        <taxon>Cheravirus avii</taxon>
    </lineage>
</organism>
<reference key="1">
    <citation type="journal article" date="2004" name="Arch. Virol.">
        <title>A new potato virus in a new lineage of picorna-like viruses.</title>
        <authorList>
            <person name="Thompson J.R."/>
            <person name="Perry K.L."/>
            <person name="De Jong W."/>
        </authorList>
    </citation>
    <scope>NUCLEOTIDE SEQUENCE [GENOMIC RNA]</scope>
</reference>
<proteinExistence type="inferred from homology"/>